<gene>
    <name evidence="1" type="primary">rplR</name>
    <name type="ordered locus">TTE2275</name>
</gene>
<keyword id="KW-1185">Reference proteome</keyword>
<keyword id="KW-0687">Ribonucleoprotein</keyword>
<keyword id="KW-0689">Ribosomal protein</keyword>
<keyword id="KW-0694">RNA-binding</keyword>
<keyword id="KW-0699">rRNA-binding</keyword>
<dbReference type="EMBL" id="AE008691">
    <property type="protein sequence ID" value="AAM25419.1"/>
    <property type="molecule type" value="Genomic_DNA"/>
</dbReference>
<dbReference type="RefSeq" id="WP_011026322.1">
    <property type="nucleotide sequence ID" value="NZ_JANUCV010000001.1"/>
</dbReference>
<dbReference type="SMR" id="Q8R7X0"/>
<dbReference type="STRING" id="273068.TTE2275"/>
<dbReference type="KEGG" id="tte:TTE2275"/>
<dbReference type="eggNOG" id="COG0256">
    <property type="taxonomic scope" value="Bacteria"/>
</dbReference>
<dbReference type="HOGENOM" id="CLU_098841_0_1_9"/>
<dbReference type="OrthoDB" id="9810939at2"/>
<dbReference type="Proteomes" id="UP000000555">
    <property type="component" value="Chromosome"/>
</dbReference>
<dbReference type="GO" id="GO:0022625">
    <property type="term" value="C:cytosolic large ribosomal subunit"/>
    <property type="evidence" value="ECO:0007669"/>
    <property type="project" value="TreeGrafter"/>
</dbReference>
<dbReference type="GO" id="GO:0008097">
    <property type="term" value="F:5S rRNA binding"/>
    <property type="evidence" value="ECO:0007669"/>
    <property type="project" value="TreeGrafter"/>
</dbReference>
<dbReference type="GO" id="GO:0003735">
    <property type="term" value="F:structural constituent of ribosome"/>
    <property type="evidence" value="ECO:0007669"/>
    <property type="project" value="InterPro"/>
</dbReference>
<dbReference type="GO" id="GO:0006412">
    <property type="term" value="P:translation"/>
    <property type="evidence" value="ECO:0007669"/>
    <property type="project" value="UniProtKB-UniRule"/>
</dbReference>
<dbReference type="CDD" id="cd00432">
    <property type="entry name" value="Ribosomal_L18_L5e"/>
    <property type="match status" value="1"/>
</dbReference>
<dbReference type="FunFam" id="3.30.420.100:FF:000001">
    <property type="entry name" value="50S ribosomal protein L18"/>
    <property type="match status" value="1"/>
</dbReference>
<dbReference type="Gene3D" id="3.30.420.100">
    <property type="match status" value="1"/>
</dbReference>
<dbReference type="HAMAP" id="MF_01337_B">
    <property type="entry name" value="Ribosomal_uL18_B"/>
    <property type="match status" value="1"/>
</dbReference>
<dbReference type="InterPro" id="IPR004389">
    <property type="entry name" value="Ribosomal_uL18_bac-type"/>
</dbReference>
<dbReference type="InterPro" id="IPR005484">
    <property type="entry name" value="Ribosomal_uL18_bac/euk"/>
</dbReference>
<dbReference type="NCBIfam" id="TIGR00060">
    <property type="entry name" value="L18_bact"/>
    <property type="match status" value="1"/>
</dbReference>
<dbReference type="PANTHER" id="PTHR12899">
    <property type="entry name" value="39S RIBOSOMAL PROTEIN L18, MITOCHONDRIAL"/>
    <property type="match status" value="1"/>
</dbReference>
<dbReference type="PANTHER" id="PTHR12899:SF3">
    <property type="entry name" value="LARGE RIBOSOMAL SUBUNIT PROTEIN UL18M"/>
    <property type="match status" value="1"/>
</dbReference>
<dbReference type="Pfam" id="PF00861">
    <property type="entry name" value="Ribosomal_L18p"/>
    <property type="match status" value="1"/>
</dbReference>
<dbReference type="SUPFAM" id="SSF53137">
    <property type="entry name" value="Translational machinery components"/>
    <property type="match status" value="1"/>
</dbReference>
<evidence type="ECO:0000255" key="1">
    <source>
        <dbReference type="HAMAP-Rule" id="MF_01337"/>
    </source>
</evidence>
<evidence type="ECO:0000305" key="2"/>
<protein>
    <recommendedName>
        <fullName evidence="1">Large ribosomal subunit protein uL18</fullName>
    </recommendedName>
    <alternativeName>
        <fullName evidence="2">50S ribosomal protein L18</fullName>
    </alternativeName>
</protein>
<accession>Q8R7X0</accession>
<feature type="chain" id="PRO_0000131374" description="Large ribosomal subunit protein uL18">
    <location>
        <begin position="1"/>
        <end position="121"/>
    </location>
</feature>
<sequence>MIIKPSRNELRKKRHLRVRKKVFGTPERPRLNVYKSLKHIYAQIIDDTKGHTLVSASTLDPELRDVAKGANKQSAKLVGELIAKRALEKGIKDVVFDRGGYLYHGVVKELADAARQAGLNF</sequence>
<comment type="function">
    <text evidence="1">This is one of the proteins that bind and probably mediate the attachment of the 5S RNA into the large ribosomal subunit, where it forms part of the central protuberance.</text>
</comment>
<comment type="subunit">
    <text evidence="1">Part of the 50S ribosomal subunit; part of the 5S rRNA/L5/L18/L25 subcomplex. Contacts the 5S and 23S rRNAs.</text>
</comment>
<comment type="similarity">
    <text evidence="1">Belongs to the universal ribosomal protein uL18 family.</text>
</comment>
<proteinExistence type="inferred from homology"/>
<organism>
    <name type="scientific">Caldanaerobacter subterraneus subsp. tengcongensis (strain DSM 15242 / JCM 11007 / NBRC 100824 / MB4)</name>
    <name type="common">Thermoanaerobacter tengcongensis</name>
    <dbReference type="NCBI Taxonomy" id="273068"/>
    <lineage>
        <taxon>Bacteria</taxon>
        <taxon>Bacillati</taxon>
        <taxon>Bacillota</taxon>
        <taxon>Clostridia</taxon>
        <taxon>Thermoanaerobacterales</taxon>
        <taxon>Thermoanaerobacteraceae</taxon>
        <taxon>Caldanaerobacter</taxon>
    </lineage>
</organism>
<reference key="1">
    <citation type="journal article" date="2002" name="Genome Res.">
        <title>A complete sequence of the T. tengcongensis genome.</title>
        <authorList>
            <person name="Bao Q."/>
            <person name="Tian Y."/>
            <person name="Li W."/>
            <person name="Xu Z."/>
            <person name="Xuan Z."/>
            <person name="Hu S."/>
            <person name="Dong W."/>
            <person name="Yang J."/>
            <person name="Chen Y."/>
            <person name="Xue Y."/>
            <person name="Xu Y."/>
            <person name="Lai X."/>
            <person name="Huang L."/>
            <person name="Dong X."/>
            <person name="Ma Y."/>
            <person name="Ling L."/>
            <person name="Tan H."/>
            <person name="Chen R."/>
            <person name="Wang J."/>
            <person name="Yu J."/>
            <person name="Yang H."/>
        </authorList>
    </citation>
    <scope>NUCLEOTIDE SEQUENCE [LARGE SCALE GENOMIC DNA]</scope>
    <source>
        <strain>DSM 15242 / JCM 11007 / NBRC 100824 / MB4</strain>
    </source>
</reference>
<name>RL18_CALS4</name>